<dbReference type="EC" id="3.6.1.-" evidence="1"/>
<dbReference type="EMBL" id="AE014075">
    <property type="protein sequence ID" value="AAN79040.1"/>
    <property type="status" value="ALT_INIT"/>
    <property type="molecule type" value="Genomic_DNA"/>
</dbReference>
<dbReference type="RefSeq" id="WP_001346341.1">
    <property type="nucleotide sequence ID" value="NZ_CP051263.1"/>
</dbReference>
<dbReference type="SMR" id="Q8FKA2"/>
<dbReference type="STRING" id="199310.c0562"/>
<dbReference type="KEGG" id="ecc:c0562"/>
<dbReference type="eggNOG" id="COG0561">
    <property type="taxonomic scope" value="Bacteria"/>
</dbReference>
<dbReference type="HOGENOM" id="CLU_044146_5_2_6"/>
<dbReference type="Proteomes" id="UP000001410">
    <property type="component" value="Chromosome"/>
</dbReference>
<dbReference type="GO" id="GO:0002145">
    <property type="term" value="F:4-amino-5-hydroxymethyl-2-methylpyrimidine diphosphatase activity"/>
    <property type="evidence" value="ECO:0007669"/>
    <property type="project" value="RHEA"/>
</dbReference>
<dbReference type="GO" id="GO:0000287">
    <property type="term" value="F:magnesium ion binding"/>
    <property type="evidence" value="ECO:0000250"/>
    <property type="project" value="UniProtKB"/>
</dbReference>
<dbReference type="GO" id="GO:0016791">
    <property type="term" value="F:phosphatase activity"/>
    <property type="evidence" value="ECO:0000250"/>
    <property type="project" value="UniProtKB"/>
</dbReference>
<dbReference type="CDD" id="cd07516">
    <property type="entry name" value="HAD_Pase"/>
    <property type="match status" value="1"/>
</dbReference>
<dbReference type="FunFam" id="3.30.1240.10:FF:000002">
    <property type="entry name" value="HMP-PP phosphatase"/>
    <property type="match status" value="1"/>
</dbReference>
<dbReference type="Gene3D" id="3.30.1240.10">
    <property type="match status" value="1"/>
</dbReference>
<dbReference type="Gene3D" id="3.40.50.1000">
    <property type="entry name" value="HAD superfamily/HAD-like"/>
    <property type="match status" value="1"/>
</dbReference>
<dbReference type="HAMAP" id="MF_01847">
    <property type="entry name" value="HMP_PP_phosphat"/>
    <property type="match status" value="1"/>
</dbReference>
<dbReference type="InterPro" id="IPR000150">
    <property type="entry name" value="Cof"/>
</dbReference>
<dbReference type="InterPro" id="IPR036412">
    <property type="entry name" value="HAD-like_sf"/>
</dbReference>
<dbReference type="InterPro" id="IPR006379">
    <property type="entry name" value="HAD-SF_hydro_IIB"/>
</dbReference>
<dbReference type="InterPro" id="IPR023214">
    <property type="entry name" value="HAD_sf"/>
</dbReference>
<dbReference type="InterPro" id="IPR023938">
    <property type="entry name" value="HMP-PP_phosphatase"/>
</dbReference>
<dbReference type="NCBIfam" id="TIGR00099">
    <property type="entry name" value="Cof-subfamily"/>
    <property type="match status" value="1"/>
</dbReference>
<dbReference type="NCBIfam" id="TIGR01484">
    <property type="entry name" value="HAD-SF-IIB"/>
    <property type="match status" value="1"/>
</dbReference>
<dbReference type="NCBIfam" id="NF011705">
    <property type="entry name" value="PRK15126.1"/>
    <property type="match status" value="1"/>
</dbReference>
<dbReference type="PANTHER" id="PTHR47267">
    <property type="match status" value="1"/>
</dbReference>
<dbReference type="PANTHER" id="PTHR47267:SF2">
    <property type="entry name" value="HMP-PP PHOSPHATASE"/>
    <property type="match status" value="1"/>
</dbReference>
<dbReference type="Pfam" id="PF08282">
    <property type="entry name" value="Hydrolase_3"/>
    <property type="match status" value="1"/>
</dbReference>
<dbReference type="SFLD" id="SFLDG01140">
    <property type="entry name" value="C2.B:_Phosphomannomutase_and_P"/>
    <property type="match status" value="1"/>
</dbReference>
<dbReference type="SFLD" id="SFLDS00003">
    <property type="entry name" value="Haloacid_Dehalogenase"/>
    <property type="match status" value="1"/>
</dbReference>
<dbReference type="SUPFAM" id="SSF56784">
    <property type="entry name" value="HAD-like"/>
    <property type="match status" value="1"/>
</dbReference>
<dbReference type="PROSITE" id="PS01228">
    <property type="entry name" value="COF_1"/>
    <property type="match status" value="1"/>
</dbReference>
<dbReference type="PROSITE" id="PS01229">
    <property type="entry name" value="COF_2"/>
    <property type="match status" value="1"/>
</dbReference>
<keyword id="KW-0378">Hydrolase</keyword>
<keyword id="KW-0460">Magnesium</keyword>
<keyword id="KW-0479">Metal-binding</keyword>
<keyword id="KW-1185">Reference proteome</keyword>
<evidence type="ECO:0000255" key="1">
    <source>
        <dbReference type="HAMAP-Rule" id="MF_01847"/>
    </source>
</evidence>
<evidence type="ECO:0000305" key="2"/>
<name>COF_ECOL6</name>
<protein>
    <recommendedName>
        <fullName evidence="1">HMP-PP phosphatase</fullName>
        <ecNumber evidence="1">3.6.1.-</ecNumber>
    </recommendedName>
</protein>
<gene>
    <name evidence="1" type="primary">cof</name>
    <name type="ordered locus">c0562</name>
</gene>
<feature type="chain" id="PRO_0000342984" description="HMP-PP phosphatase">
    <location>
        <begin position="1"/>
        <end position="272"/>
    </location>
</feature>
<feature type="active site" description="Nucleophile" evidence="1">
    <location>
        <position position="8"/>
    </location>
</feature>
<feature type="binding site" evidence="1">
    <location>
        <position position="8"/>
    </location>
    <ligand>
        <name>Mg(2+)</name>
        <dbReference type="ChEBI" id="CHEBI:18420"/>
    </ligand>
</feature>
<feature type="binding site" evidence="1">
    <location>
        <position position="10"/>
    </location>
    <ligand>
        <name>Mg(2+)</name>
        <dbReference type="ChEBI" id="CHEBI:18420"/>
    </ligand>
</feature>
<feature type="binding site" evidence="1">
    <location>
        <position position="212"/>
    </location>
    <ligand>
        <name>Mg(2+)</name>
        <dbReference type="ChEBI" id="CHEBI:18420"/>
    </ligand>
</feature>
<proteinExistence type="inferred from homology"/>
<organism>
    <name type="scientific">Escherichia coli O6:H1 (strain CFT073 / ATCC 700928 / UPEC)</name>
    <dbReference type="NCBI Taxonomy" id="199310"/>
    <lineage>
        <taxon>Bacteria</taxon>
        <taxon>Pseudomonadati</taxon>
        <taxon>Pseudomonadota</taxon>
        <taxon>Gammaproteobacteria</taxon>
        <taxon>Enterobacterales</taxon>
        <taxon>Enterobacteriaceae</taxon>
        <taxon>Escherichia</taxon>
    </lineage>
</organism>
<sequence>MARLAAFDMDGTLLMPDHHLGEKTLSTLARLRERDITLTFATGRHALEMQHILGALSLDAYLITGNGTRVHSLEGELLHRDDLPADVAELVLYQQWDTRASMHIFNDDGWFTGKENPALLQAFVYSGFRYQIIDVKKMPLGSVTKICFCGDHDDLTRLQIQLYEALGERAHLCFSATDCLEVLPVGCNKGAALTVLTQHLGLSLRDCMAFGDAMNDREMLGSVGSGFIMGNAMPQLRAELPHLPVIGHCRNQAVSHYLTHWLDYPHLPYSPE</sequence>
<accession>Q8FKA2</accession>
<reference key="1">
    <citation type="journal article" date="2002" name="Proc. Natl. Acad. Sci. U.S.A.">
        <title>Extensive mosaic structure revealed by the complete genome sequence of uropathogenic Escherichia coli.</title>
        <authorList>
            <person name="Welch R.A."/>
            <person name="Burland V."/>
            <person name="Plunkett G. III"/>
            <person name="Redford P."/>
            <person name="Roesch P."/>
            <person name="Rasko D."/>
            <person name="Buckles E.L."/>
            <person name="Liou S.-R."/>
            <person name="Boutin A."/>
            <person name="Hackett J."/>
            <person name="Stroud D."/>
            <person name="Mayhew G.F."/>
            <person name="Rose D.J."/>
            <person name="Zhou S."/>
            <person name="Schwartz D.C."/>
            <person name="Perna N.T."/>
            <person name="Mobley H.L.T."/>
            <person name="Donnenberg M.S."/>
            <person name="Blattner F.R."/>
        </authorList>
    </citation>
    <scope>NUCLEOTIDE SEQUENCE [LARGE SCALE GENOMIC DNA]</scope>
    <source>
        <strain>CFT073 / ATCC 700928 / UPEC</strain>
    </source>
</reference>
<comment type="function">
    <text evidence="1">Catalyzes the hydrolysis of 4-amino-2-methyl-5-hydroxymethylpyrimidine pyrophosphate (HMP-PP) to 4-amino-2-methyl-5-hydroxymethylpyrimidine phosphate (HMP-P).</text>
</comment>
<comment type="catalytic activity">
    <reaction evidence="1">
        <text>4-amino-2-methyl-5-(diphosphooxymethyl)pyrimidine + H2O = 4-amino-2-methyl-5-(phosphooxymethyl)pyrimidine + phosphate + H(+)</text>
        <dbReference type="Rhea" id="RHEA:27914"/>
        <dbReference type="ChEBI" id="CHEBI:15377"/>
        <dbReference type="ChEBI" id="CHEBI:15378"/>
        <dbReference type="ChEBI" id="CHEBI:43474"/>
        <dbReference type="ChEBI" id="CHEBI:57841"/>
        <dbReference type="ChEBI" id="CHEBI:58354"/>
    </reaction>
</comment>
<comment type="cofactor">
    <cofactor evidence="1">
        <name>Mg(2+)</name>
        <dbReference type="ChEBI" id="CHEBI:18420"/>
    </cofactor>
</comment>
<comment type="similarity">
    <text evidence="1">Belongs to the HAD-like hydrolase superfamily. Cof family.</text>
</comment>
<comment type="sequence caution" evidence="2">
    <conflict type="erroneous initiation">
        <sequence resource="EMBL-CDS" id="AAN79040"/>
    </conflict>
    <text>Extended N-terminus.</text>
</comment>